<feature type="signal peptide" evidence="2">
    <location>
        <begin position="1"/>
        <end position="30"/>
    </location>
</feature>
<feature type="chain" id="PRO_0000038278" description="Envelope glycoprotein L" evidence="2">
    <location>
        <begin position="31"/>
        <end position="278"/>
    </location>
</feature>
<feature type="domain" description="gL betaherpesvirus-type" evidence="3">
    <location>
        <begin position="43"/>
        <end position="256"/>
    </location>
</feature>
<feature type="disulfide bond" description="Interchain" evidence="3">
    <location>
        <position position="47"/>
    </location>
</feature>
<feature type="disulfide bond" description="Interchain" evidence="3">
    <location>
        <position position="54"/>
    </location>
</feature>
<feature type="disulfide bond" description="Interchain" evidence="3">
    <location>
        <position position="144"/>
    </location>
</feature>
<feature type="disulfide bond" evidence="3">
    <location>
        <begin position="154"/>
        <end position="159"/>
    </location>
</feature>
<feature type="helix" evidence="8">
    <location>
        <begin position="47"/>
        <end position="56"/>
    </location>
</feature>
<feature type="helix" evidence="8">
    <location>
        <begin position="67"/>
        <end position="69"/>
    </location>
</feature>
<feature type="strand" evidence="8">
    <location>
        <begin position="77"/>
        <end position="79"/>
    </location>
</feature>
<feature type="helix" evidence="8">
    <location>
        <begin position="84"/>
        <end position="86"/>
    </location>
</feature>
<feature type="strand" evidence="8">
    <location>
        <begin position="94"/>
        <end position="96"/>
    </location>
</feature>
<feature type="helix" evidence="8">
    <location>
        <begin position="103"/>
        <end position="111"/>
    </location>
</feature>
<feature type="helix" evidence="8">
    <location>
        <begin position="118"/>
        <end position="127"/>
    </location>
</feature>
<feature type="strand" evidence="7">
    <location>
        <begin position="128"/>
        <end position="130"/>
    </location>
</feature>
<feature type="helix" evidence="8">
    <location>
        <begin position="133"/>
        <end position="136"/>
    </location>
</feature>
<feature type="strand" evidence="8">
    <location>
        <begin position="141"/>
        <end position="145"/>
    </location>
</feature>
<feature type="strand" evidence="8">
    <location>
        <begin position="151"/>
        <end position="155"/>
    </location>
</feature>
<feature type="strand" evidence="8">
    <location>
        <begin position="158"/>
        <end position="162"/>
    </location>
</feature>
<feature type="helix" evidence="8">
    <location>
        <begin position="173"/>
        <end position="175"/>
    </location>
</feature>
<feature type="strand" evidence="8">
    <location>
        <begin position="178"/>
        <end position="184"/>
    </location>
</feature>
<feature type="turn" evidence="8">
    <location>
        <begin position="185"/>
        <end position="187"/>
    </location>
</feature>
<feature type="strand" evidence="8">
    <location>
        <begin position="188"/>
        <end position="197"/>
    </location>
</feature>
<feature type="turn" evidence="8">
    <location>
        <begin position="198"/>
        <end position="201"/>
    </location>
</feature>
<feature type="strand" evidence="8">
    <location>
        <begin position="202"/>
        <end position="212"/>
    </location>
</feature>
<feature type="helix" evidence="8">
    <location>
        <begin position="216"/>
        <end position="218"/>
    </location>
</feature>
<feature type="helix" evidence="8">
    <location>
        <begin position="219"/>
        <end position="235"/>
    </location>
</feature>
<feature type="helix" evidence="8">
    <location>
        <begin position="242"/>
        <end position="252"/>
    </location>
</feature>
<feature type="helix" evidence="8">
    <location>
        <begin position="255"/>
        <end position="257"/>
    </location>
</feature>
<comment type="function">
    <text evidence="1 2">The heterodimer glycoprotein H-glycoprotein L is required for the fusion of viral and plasma membranes leading to virus entry into the host cell. Acts as a functional inhibitor of gH and maintains gH in an inhibited form. Upon binding to host integrins, gL dissociates from gH leading to activation of the viral fusion glycoproteins gB and gH (By similarity). In human cytomegalovirus, forms two distincts complexes to mediate viral entry, a trimer and a pentamer at the surface of the virion envelope. The gH-gL-gO trimer is required for infection in fibroblasts by interacting with host PDGFRA. The gH-gL-UL128-UL130-UL131A pentamer is essential for viral entry in epithelial, endothelial and myeloid cells via interaction with host NRP2 (By similarity).</text>
</comment>
<comment type="subunit">
    <text evidence="1 2 4 5">Interacts with glycoprotein H (gH); this interaction is necessary for the correct processing and cell surface expression of gH (By similarity). Forms the envelope pentamer complex (PC) composed of gH, gL, UL128, UL130, and UL131A. The pentamer interacts with host NRP2. Forms the envelope trimer complex composed of gH, gL, and gO. The trimer interacts with host PDGFRA (By similarity) (PubMed:21880752, PubMed:9733861).</text>
</comment>
<comment type="subcellular location">
    <subcellularLocation>
        <location evidence="2">Virion membrane</location>
        <topology evidence="2">Peripheral membrane protein</topology>
        <orientation evidence="2">Extracellular side</orientation>
    </subcellularLocation>
    <subcellularLocation>
        <location evidence="2">Host cell membrane</location>
        <topology evidence="2">Peripheral membrane protein</topology>
        <orientation evidence="2">Extracellular side</orientation>
    </subcellularLocation>
    <subcellularLocation>
        <location evidence="2 4">Host Golgi apparatus</location>
        <location evidence="2 4">Host trans-Golgi network</location>
    </subcellularLocation>
    <text evidence="2">gL associates with the extravirion surface through its binding to gH. During virion morphogenesis, this protein probably accumulates in the host trans-Golgi where secondary envelopment occurs.</text>
</comment>
<comment type="similarity">
    <text evidence="3">Belongs to the herpesviridae glycoprotein L (gL) family. Betaherpesvirinae gL subfamily.</text>
</comment>
<comment type="sequence caution" evidence="6">
    <conflict type="erroneous initiation">
        <sequence resource="EMBL-CDS" id="CAA35317"/>
    </conflict>
</comment>
<sequence>MCRRPDCGFSFSPGPVVLLWCCLLLPIVSSVAVSVAPTAAEKVPAECPELTRRCLLGEVFQGDKYESWLRPLVNVTRRDGPLSQLIRYRPVTPEAANSVLLDDAFLDTLALLYNNPDQLRALLTLLSSDTAPRWMTVMRGYSECGDGSPAVYTCVDDLCRGYDLTRLSYGRSIFTEHVLGFELVPPSLFNVVVAIRNEATRTNRAVRLPVSTAAAPEGITLFYGLYNAVKEFCLRHQLDPPLLRHLDKYYAGLPPELKQTRVNLPAHSRYGPQAVDAR</sequence>
<name>GL_HCMVA</name>
<evidence type="ECO:0000250" key="1">
    <source>
        <dbReference type="UniProtKB" id="F5HCH8"/>
    </source>
</evidence>
<evidence type="ECO:0000255" key="2">
    <source>
        <dbReference type="HAMAP-Rule" id="MF_04036"/>
    </source>
</evidence>
<evidence type="ECO:0000255" key="3">
    <source>
        <dbReference type="PROSITE-ProRule" id="PRU01369"/>
    </source>
</evidence>
<evidence type="ECO:0000269" key="4">
    <source>
    </source>
</evidence>
<evidence type="ECO:0000269" key="5">
    <source>
    </source>
</evidence>
<evidence type="ECO:0000305" key="6"/>
<evidence type="ECO:0007829" key="7">
    <source>
        <dbReference type="PDB" id="7RAM"/>
    </source>
</evidence>
<evidence type="ECO:0007829" key="8">
    <source>
        <dbReference type="PDB" id="8TCO"/>
    </source>
</evidence>
<dbReference type="EMBL" id="X17403">
    <property type="protein sequence ID" value="CAA35317.1"/>
    <property type="status" value="ALT_INIT"/>
    <property type="molecule type" value="Genomic_DNA"/>
</dbReference>
<dbReference type="EMBL" id="AF530171">
    <property type="protein sequence ID" value="AAM96168.1"/>
    <property type="molecule type" value="Genomic_DNA"/>
</dbReference>
<dbReference type="EMBL" id="AF530172">
    <property type="protein sequence ID" value="AAM96169.1"/>
    <property type="molecule type" value="Genomic_DNA"/>
</dbReference>
<dbReference type="EMBL" id="AF530173">
    <property type="protein sequence ID" value="AAM96170.1"/>
    <property type="molecule type" value="Genomic_DNA"/>
</dbReference>
<dbReference type="EMBL" id="BK000394">
    <property type="protein sequence ID" value="DAA00105.1"/>
    <property type="molecule type" value="Genomic_DNA"/>
</dbReference>
<dbReference type="PIR" id="S09882">
    <property type="entry name" value="S09882"/>
</dbReference>
<dbReference type="PDB" id="7M30">
    <property type="method" value="EM"/>
    <property type="resolution" value="3.81 A"/>
    <property type="chains" value="B=31-278"/>
</dbReference>
<dbReference type="PDB" id="7RAM">
    <property type="method" value="EM"/>
    <property type="resolution" value="3.43 A"/>
    <property type="chains" value="B=37-278"/>
</dbReference>
<dbReference type="PDB" id="8TCO">
    <property type="method" value="EM"/>
    <property type="resolution" value="2.80 A"/>
    <property type="chains" value="B=31-278"/>
</dbReference>
<dbReference type="PDBsum" id="7M30"/>
<dbReference type="PDBsum" id="7RAM"/>
<dbReference type="PDBsum" id="8TCO"/>
<dbReference type="EMDB" id="EMD-23640"/>
<dbReference type="EMDB" id="EMD-24369"/>
<dbReference type="SMR" id="P16832"/>
<dbReference type="Proteomes" id="UP000008991">
    <property type="component" value="Segment"/>
</dbReference>
<dbReference type="Proteomes" id="UP000008992">
    <property type="component" value="Segment"/>
</dbReference>
<dbReference type="GO" id="GO:0044177">
    <property type="term" value="C:host cell Golgi apparatus"/>
    <property type="evidence" value="ECO:0007669"/>
    <property type="project" value="UniProtKB-SubCell"/>
</dbReference>
<dbReference type="GO" id="GO:0020002">
    <property type="term" value="C:host cell plasma membrane"/>
    <property type="evidence" value="ECO:0007669"/>
    <property type="project" value="UniProtKB-SubCell"/>
</dbReference>
<dbReference type="GO" id="GO:0016020">
    <property type="term" value="C:membrane"/>
    <property type="evidence" value="ECO:0007669"/>
    <property type="project" value="UniProtKB-KW"/>
</dbReference>
<dbReference type="GO" id="GO:0019031">
    <property type="term" value="C:viral envelope"/>
    <property type="evidence" value="ECO:0007669"/>
    <property type="project" value="UniProtKB-UniRule"/>
</dbReference>
<dbReference type="GO" id="GO:0055036">
    <property type="term" value="C:virion membrane"/>
    <property type="evidence" value="ECO:0007669"/>
    <property type="project" value="UniProtKB-SubCell"/>
</dbReference>
<dbReference type="GO" id="GO:0098670">
    <property type="term" value="P:entry receptor-mediated virion attachment to host cell"/>
    <property type="evidence" value="ECO:0007669"/>
    <property type="project" value="UniProtKB-KW"/>
</dbReference>
<dbReference type="GO" id="GO:0019064">
    <property type="term" value="P:fusion of virus membrane with host plasma membrane"/>
    <property type="evidence" value="ECO:0007669"/>
    <property type="project" value="UniProtKB-UniRule"/>
</dbReference>
<dbReference type="GO" id="GO:0046718">
    <property type="term" value="P:symbiont entry into host cell"/>
    <property type="evidence" value="ECO:0007669"/>
    <property type="project" value="UniProtKB-KW"/>
</dbReference>
<dbReference type="HAMAP" id="MF_04036">
    <property type="entry name" value="HSV_GL_betahv"/>
    <property type="match status" value="1"/>
</dbReference>
<dbReference type="InterPro" id="IPR002689">
    <property type="entry name" value="Cytomegalo_gL"/>
</dbReference>
<dbReference type="Pfam" id="PF01801">
    <property type="entry name" value="Cytomega_gL"/>
    <property type="match status" value="1"/>
</dbReference>
<dbReference type="PROSITE" id="PS52025">
    <property type="entry name" value="GL_BHV"/>
    <property type="match status" value="1"/>
</dbReference>
<protein>
    <recommendedName>
        <fullName evidence="2">Envelope glycoprotein L</fullName>
        <shortName evidence="2">gL</shortName>
    </recommendedName>
</protein>
<keyword id="KW-0002">3D-structure</keyword>
<keyword id="KW-1015">Disulfide bond</keyword>
<keyword id="KW-1169">Fusion of virus membrane with host cell membrane</keyword>
<keyword id="KW-1168">Fusion of virus membrane with host membrane</keyword>
<keyword id="KW-0325">Glycoprotein</keyword>
<keyword id="KW-1032">Host cell membrane</keyword>
<keyword id="KW-1040">Host Golgi apparatus</keyword>
<keyword id="KW-1043">Host membrane</keyword>
<keyword id="KW-0945">Host-virus interaction</keyword>
<keyword id="KW-0472">Membrane</keyword>
<keyword id="KW-1185">Reference proteome</keyword>
<keyword id="KW-0732">Signal</keyword>
<keyword id="KW-1161">Viral attachment to host cell</keyword>
<keyword id="KW-1234">Viral attachment to host entry receptor</keyword>
<keyword id="KW-0261">Viral envelope protein</keyword>
<keyword id="KW-1162">Viral penetration into host cytoplasm</keyword>
<keyword id="KW-0946">Virion</keyword>
<keyword id="KW-1160">Virus entry into host cell</keyword>
<reference key="1">
    <citation type="journal article" date="1990" name="Curr. Top. Microbiol. Immunol.">
        <title>Analysis of the protein-coding content of the sequence of human cytomegalovirus strain AD169.</title>
        <authorList>
            <person name="Chee M.S."/>
            <person name="Bankier A.T."/>
            <person name="Beck S."/>
            <person name="Bohni R."/>
            <person name="Brown C.M."/>
            <person name="Cerny R."/>
            <person name="Horsnell T."/>
            <person name="Hutchison C.A. III"/>
            <person name="Kouzarides T."/>
            <person name="Martignetti J.A."/>
            <person name="Preddie E."/>
            <person name="Satchwell S.C."/>
            <person name="Tomlinson P."/>
            <person name="Weston K.M."/>
            <person name="Barrell B.G."/>
        </authorList>
    </citation>
    <scope>NUCLEOTIDE SEQUENCE [LARGE SCALE GENOMIC DNA]</scope>
</reference>
<reference key="2">
    <citation type="journal article" date="2002" name="J. Virol.">
        <title>The genes encoding the gCIII complex of human cytomegalovirus exist in highly diverse combinations in clinical isolates.</title>
        <authorList>
            <person name="Rasmussen L."/>
            <person name="Geissler A."/>
            <person name="Cowan C."/>
            <person name="Chase A."/>
            <person name="Winters M."/>
        </authorList>
    </citation>
    <scope>NUCLEOTIDE SEQUENCE [GENOMIC DNA]</scope>
</reference>
<reference key="3">
    <citation type="journal article" date="2003" name="J. Gen. Virol.">
        <title>The human cytomegalovirus genome revisited: comparison with the chimpanzee cytomegalovirus genome.</title>
        <authorList>
            <person name="Davison A.J."/>
            <person name="Dolan A."/>
            <person name="Akter P."/>
            <person name="Addison C."/>
            <person name="Dargan D.J."/>
            <person name="Alcendor D.J."/>
            <person name="McGeoch D.J."/>
            <person name="Hayward G.S."/>
        </authorList>
    </citation>
    <scope>GENOME REANNOTATION</scope>
    <source>
        <strain>Isolate 650</strain>
        <strain>Isolate 813</strain>
    </source>
</reference>
<reference key="4">
    <citation type="journal article" date="2003" name="J. Gen. Virol.">
        <authorList>
            <person name="Davison A.J."/>
            <person name="Dolan A."/>
            <person name="Akter P."/>
            <person name="Addison C."/>
            <person name="Dargan D.J."/>
            <person name="Alcendor D.J."/>
            <person name="McGeoch D.J."/>
            <person name="Hayward G.S."/>
        </authorList>
    </citation>
    <scope>ERRATUM OF PUBMED:12533697</scope>
</reference>
<reference key="5">
    <citation type="journal article" date="1998" name="J. Virol.">
        <title>The human cytomegalovirus UL74 gene encodes the third component of the glycoprotein H-glycoprotein L-containing envelope complex.</title>
        <authorList>
            <person name="Huber M.T."/>
            <person name="Compton T."/>
        </authorList>
    </citation>
    <scope>IDENTIFICATION IN A COMPLEX WITH GO AND GH</scope>
</reference>
<reference key="6">
    <citation type="journal article" date="2004" name="J. Virol.">
        <title>Identification of proteins in human cytomegalovirus (HCMV) particles: the HCMV proteome.</title>
        <authorList>
            <person name="Varnum S.M."/>
            <person name="Streblow D.N."/>
            <person name="Monroe M.E."/>
            <person name="Smith P."/>
            <person name="Auberry K.J."/>
            <person name="Pasa-Tolic L."/>
            <person name="Wang D."/>
            <person name="Camp D.G. II"/>
            <person name="Rodland K."/>
            <person name="Wiley S."/>
            <person name="Britt W."/>
            <person name="Shenk T."/>
            <person name="Smith R.D."/>
            <person name="Nelson J.A."/>
        </authorList>
    </citation>
    <scope>IDENTIFICATION</scope>
</reference>
<reference key="7">
    <citation type="journal article" date="2004" name="J. Virol.">
        <authorList>
            <person name="Varnum S.M."/>
            <person name="Streblow D.N."/>
            <person name="Monroe M.E."/>
            <person name="Smith P."/>
            <person name="Auberry K.J."/>
            <person name="Pasa-Tolic L."/>
            <person name="Wang D."/>
            <person name="Camp D.G. II"/>
            <person name="Rodland K."/>
            <person name="Wiley S."/>
            <person name="Britt W."/>
            <person name="Shenk T."/>
            <person name="Smith R.D."/>
            <person name="Nelson J.A."/>
        </authorList>
    </citation>
    <scope>ERRATUM OF PUBMED:15452216</scope>
</reference>
<reference key="8">
    <citation type="journal article" date="2011" name="J. Virol.">
        <title>Human cytomegalovirus glycoprotein gO complexes with gH/gL, promoting interference with viral entry into human fibroblasts but not entry into epithelial cells.</title>
        <authorList>
            <person name="Vanarsdall A.L."/>
            <person name="Chase M.C."/>
            <person name="Johnson D.C."/>
        </authorList>
    </citation>
    <scope>INTERACTION WITH GO</scope>
    <scope>SUBCELLULAR LOCATION</scope>
</reference>
<organism>
    <name type="scientific">Human cytomegalovirus (strain AD169)</name>
    <name type="common">HHV-5</name>
    <name type="synonym">Human herpesvirus 5</name>
    <dbReference type="NCBI Taxonomy" id="10360"/>
    <lineage>
        <taxon>Viruses</taxon>
        <taxon>Duplodnaviria</taxon>
        <taxon>Heunggongvirae</taxon>
        <taxon>Peploviricota</taxon>
        <taxon>Herviviricetes</taxon>
        <taxon>Herpesvirales</taxon>
        <taxon>Orthoherpesviridae</taxon>
        <taxon>Betaherpesvirinae</taxon>
        <taxon>Cytomegalovirus</taxon>
        <taxon>Cytomegalovirus humanbeta5</taxon>
        <taxon>Human cytomegalovirus</taxon>
    </lineage>
</organism>
<organismHost>
    <name type="scientific">Homo sapiens</name>
    <name type="common">Human</name>
    <dbReference type="NCBI Taxonomy" id="9606"/>
</organismHost>
<gene>
    <name evidence="2" type="primary">gL</name>
    <name type="synonym">UL115</name>
</gene>
<accession>P16832</accession>
<accession>Q7M6S9</accession>
<proteinExistence type="evidence at protein level"/>